<reference key="1">
    <citation type="journal article" date="1998" name="J. Mammal.">
        <title>Phylogeny of the dasyurid marsupial genus Antechinus based on cytochrome b, 12S rRNA, and protamine P1 genes.</title>
        <authorList>
            <person name="Armstrong L.A."/>
            <person name="Krajewski C."/>
            <person name="Westerman M."/>
        </authorList>
    </citation>
    <scope>NUCLEOTIDE SEQUENCE [GENOMIC DNA]</scope>
</reference>
<keyword id="KW-0249">Electron transport</keyword>
<keyword id="KW-0349">Heme</keyword>
<keyword id="KW-0408">Iron</keyword>
<keyword id="KW-0472">Membrane</keyword>
<keyword id="KW-0479">Metal-binding</keyword>
<keyword id="KW-0496">Mitochondrion</keyword>
<keyword id="KW-0999">Mitochondrion inner membrane</keyword>
<keyword id="KW-0679">Respiratory chain</keyword>
<keyword id="KW-0812">Transmembrane</keyword>
<keyword id="KW-1133">Transmembrane helix</keyword>
<keyword id="KW-0813">Transport</keyword>
<keyword id="KW-0830">Ubiquinone</keyword>
<accession>Q33706</accession>
<name>CYB_ANTFL</name>
<organism>
    <name type="scientific">Antechinus flavipes</name>
    <name type="common">Yellow-footed marsupial mouse</name>
    <name type="synonym">Phascogale flavipes</name>
    <dbReference type="NCBI Taxonomy" id="38775"/>
    <lineage>
        <taxon>Eukaryota</taxon>
        <taxon>Metazoa</taxon>
        <taxon>Chordata</taxon>
        <taxon>Craniata</taxon>
        <taxon>Vertebrata</taxon>
        <taxon>Euteleostomi</taxon>
        <taxon>Mammalia</taxon>
        <taxon>Metatheria</taxon>
        <taxon>Dasyuromorphia</taxon>
        <taxon>Dasyuridae</taxon>
        <taxon>Antechinus</taxon>
    </lineage>
</organism>
<proteinExistence type="inferred from homology"/>
<dbReference type="EMBL" id="U22422">
    <property type="protein sequence ID" value="AAB91491.1"/>
    <property type="molecule type" value="Genomic_DNA"/>
</dbReference>
<dbReference type="SMR" id="Q33706"/>
<dbReference type="GO" id="GO:0005743">
    <property type="term" value="C:mitochondrial inner membrane"/>
    <property type="evidence" value="ECO:0007669"/>
    <property type="project" value="UniProtKB-SubCell"/>
</dbReference>
<dbReference type="GO" id="GO:0045275">
    <property type="term" value="C:respiratory chain complex III"/>
    <property type="evidence" value="ECO:0007669"/>
    <property type="project" value="InterPro"/>
</dbReference>
<dbReference type="GO" id="GO:0046872">
    <property type="term" value="F:metal ion binding"/>
    <property type="evidence" value="ECO:0007669"/>
    <property type="project" value="UniProtKB-KW"/>
</dbReference>
<dbReference type="GO" id="GO:0008121">
    <property type="term" value="F:ubiquinol-cytochrome-c reductase activity"/>
    <property type="evidence" value="ECO:0007669"/>
    <property type="project" value="InterPro"/>
</dbReference>
<dbReference type="GO" id="GO:0006122">
    <property type="term" value="P:mitochondrial electron transport, ubiquinol to cytochrome c"/>
    <property type="evidence" value="ECO:0007669"/>
    <property type="project" value="TreeGrafter"/>
</dbReference>
<dbReference type="CDD" id="cd00290">
    <property type="entry name" value="cytochrome_b_C"/>
    <property type="match status" value="1"/>
</dbReference>
<dbReference type="CDD" id="cd00284">
    <property type="entry name" value="Cytochrome_b_N"/>
    <property type="match status" value="1"/>
</dbReference>
<dbReference type="FunFam" id="1.20.810.10:FF:000002">
    <property type="entry name" value="Cytochrome b"/>
    <property type="match status" value="1"/>
</dbReference>
<dbReference type="Gene3D" id="1.20.810.10">
    <property type="entry name" value="Cytochrome Bc1 Complex, Chain C"/>
    <property type="match status" value="1"/>
</dbReference>
<dbReference type="InterPro" id="IPR005798">
    <property type="entry name" value="Cyt_b/b6_C"/>
</dbReference>
<dbReference type="InterPro" id="IPR036150">
    <property type="entry name" value="Cyt_b/b6_C_sf"/>
</dbReference>
<dbReference type="InterPro" id="IPR005797">
    <property type="entry name" value="Cyt_b/b6_N"/>
</dbReference>
<dbReference type="InterPro" id="IPR027387">
    <property type="entry name" value="Cytb/b6-like_sf"/>
</dbReference>
<dbReference type="InterPro" id="IPR030689">
    <property type="entry name" value="Cytochrome_b"/>
</dbReference>
<dbReference type="InterPro" id="IPR048260">
    <property type="entry name" value="Cytochrome_b_C_euk/bac"/>
</dbReference>
<dbReference type="InterPro" id="IPR048259">
    <property type="entry name" value="Cytochrome_b_N_euk/bac"/>
</dbReference>
<dbReference type="InterPro" id="IPR016174">
    <property type="entry name" value="Di-haem_cyt_TM"/>
</dbReference>
<dbReference type="PANTHER" id="PTHR19271">
    <property type="entry name" value="CYTOCHROME B"/>
    <property type="match status" value="1"/>
</dbReference>
<dbReference type="PANTHER" id="PTHR19271:SF16">
    <property type="entry name" value="CYTOCHROME B"/>
    <property type="match status" value="1"/>
</dbReference>
<dbReference type="Pfam" id="PF00032">
    <property type="entry name" value="Cytochrom_B_C"/>
    <property type="match status" value="1"/>
</dbReference>
<dbReference type="Pfam" id="PF00033">
    <property type="entry name" value="Cytochrome_B"/>
    <property type="match status" value="1"/>
</dbReference>
<dbReference type="PIRSF" id="PIRSF038885">
    <property type="entry name" value="COB"/>
    <property type="match status" value="1"/>
</dbReference>
<dbReference type="SUPFAM" id="SSF81648">
    <property type="entry name" value="a domain/subunit of cytochrome bc1 complex (Ubiquinol-cytochrome c reductase)"/>
    <property type="match status" value="1"/>
</dbReference>
<dbReference type="SUPFAM" id="SSF81342">
    <property type="entry name" value="Transmembrane di-heme cytochromes"/>
    <property type="match status" value="1"/>
</dbReference>
<dbReference type="PROSITE" id="PS51003">
    <property type="entry name" value="CYTB_CTER"/>
    <property type="match status" value="1"/>
</dbReference>
<dbReference type="PROSITE" id="PS51002">
    <property type="entry name" value="CYTB_NTER"/>
    <property type="match status" value="1"/>
</dbReference>
<sequence length="381" mass="42829">MINLRKTHPLMKIINHSFIDLPAPSNISAWWNFGSLLGVCLIIQILTGFFLAMHYTSDTLTAFSSVAHICRDVNYGWLIRNLHANGASMFFMCLFLHVGRGIYYGSYLYKETWNIGVILLLTVMATAFVGYVLPWGQMSFWGATVITNLLSAIPYIGTTLAEWIWGGFAVDKATLTRFFAFHFILPFIVVALAIVHLLFLHETGSNNPSGINPDSDKIPFHPYYTIKDALGLAFLFLILLLLALFSPDSLGDPDNFSPANPLNTPPHIKPEWYFLFAYAILRSIPNKLGGVLALLASILILLIILLLHTANQRSMKFRPVSQTLFWILTANLITLTWIGGQPVEQPFIIIGQLASMLYFLLILVLMPLAGLFENYMLKPKW</sequence>
<comment type="function">
    <text evidence="2">Component of the ubiquinol-cytochrome c reductase complex (complex III or cytochrome b-c1 complex) that is part of the mitochondrial respiratory chain. The b-c1 complex mediates electron transfer from ubiquinol to cytochrome c. Contributes to the generation of a proton gradient across the mitochondrial membrane that is then used for ATP synthesis.</text>
</comment>
<comment type="cofactor">
    <cofactor evidence="2">
        <name>heme b</name>
        <dbReference type="ChEBI" id="CHEBI:60344"/>
    </cofactor>
    <text evidence="2">Binds 2 heme b groups non-covalently.</text>
</comment>
<comment type="subunit">
    <text evidence="2">The cytochrome bc1 complex contains 11 subunits: 3 respiratory subunits (MT-CYB, CYC1 and UQCRFS1), 2 core proteins (UQCRC1 and UQCRC2) and 6 low-molecular weight proteins (UQCRH/QCR6, UQCRB/QCR7, UQCRQ/QCR8, UQCR10/QCR9, UQCR11/QCR10 and a cleavage product of UQCRFS1). This cytochrome bc1 complex then forms a dimer.</text>
</comment>
<comment type="subcellular location">
    <subcellularLocation>
        <location evidence="2">Mitochondrion inner membrane</location>
        <topology evidence="2">Multi-pass membrane protein</topology>
    </subcellularLocation>
</comment>
<comment type="miscellaneous">
    <text evidence="1">Heme 1 (or BL or b562) is low-potential and absorbs at about 562 nm, and heme 2 (or BH or b566) is high-potential and absorbs at about 566 nm.</text>
</comment>
<comment type="similarity">
    <text evidence="3 4">Belongs to the cytochrome b family.</text>
</comment>
<comment type="caution">
    <text evidence="2">The full-length protein contains only eight transmembrane helices, not nine as predicted by bioinformatics tools.</text>
</comment>
<protein>
    <recommendedName>
        <fullName>Cytochrome b</fullName>
    </recommendedName>
    <alternativeName>
        <fullName>Complex III subunit 3</fullName>
    </alternativeName>
    <alternativeName>
        <fullName>Complex III subunit III</fullName>
    </alternativeName>
    <alternativeName>
        <fullName>Cytochrome b-c1 complex subunit 3</fullName>
    </alternativeName>
    <alternativeName>
        <fullName>Ubiquinol-cytochrome-c reductase complex cytochrome b subunit</fullName>
    </alternativeName>
</protein>
<feature type="chain" id="PRO_0000060592" description="Cytochrome b">
    <location>
        <begin position="1"/>
        <end position="381"/>
    </location>
</feature>
<feature type="transmembrane region" description="Helical" evidence="2">
    <location>
        <begin position="33"/>
        <end position="53"/>
    </location>
</feature>
<feature type="transmembrane region" description="Helical" evidence="2">
    <location>
        <begin position="77"/>
        <end position="98"/>
    </location>
</feature>
<feature type="transmembrane region" description="Helical" evidence="2">
    <location>
        <begin position="113"/>
        <end position="133"/>
    </location>
</feature>
<feature type="transmembrane region" description="Helical" evidence="2">
    <location>
        <begin position="178"/>
        <end position="198"/>
    </location>
</feature>
<feature type="transmembrane region" description="Helical" evidence="2">
    <location>
        <begin position="226"/>
        <end position="246"/>
    </location>
</feature>
<feature type="transmembrane region" description="Helical" evidence="2">
    <location>
        <begin position="288"/>
        <end position="308"/>
    </location>
</feature>
<feature type="transmembrane region" description="Helical" evidence="2">
    <location>
        <begin position="320"/>
        <end position="340"/>
    </location>
</feature>
<feature type="transmembrane region" description="Helical" evidence="2">
    <location>
        <begin position="347"/>
        <end position="367"/>
    </location>
</feature>
<feature type="binding site" description="axial binding residue" evidence="2">
    <location>
        <position position="83"/>
    </location>
    <ligand>
        <name>heme b</name>
        <dbReference type="ChEBI" id="CHEBI:60344"/>
        <label>b562</label>
    </ligand>
    <ligandPart>
        <name>Fe</name>
        <dbReference type="ChEBI" id="CHEBI:18248"/>
    </ligandPart>
</feature>
<feature type="binding site" description="axial binding residue" evidence="2">
    <location>
        <position position="97"/>
    </location>
    <ligand>
        <name>heme b</name>
        <dbReference type="ChEBI" id="CHEBI:60344"/>
        <label>b566</label>
    </ligand>
    <ligandPart>
        <name>Fe</name>
        <dbReference type="ChEBI" id="CHEBI:18248"/>
    </ligandPart>
</feature>
<feature type="binding site" description="axial binding residue" evidence="2">
    <location>
        <position position="182"/>
    </location>
    <ligand>
        <name>heme b</name>
        <dbReference type="ChEBI" id="CHEBI:60344"/>
        <label>b562</label>
    </ligand>
    <ligandPart>
        <name>Fe</name>
        <dbReference type="ChEBI" id="CHEBI:18248"/>
    </ligandPart>
</feature>
<feature type="binding site" description="axial binding residue" evidence="2">
    <location>
        <position position="196"/>
    </location>
    <ligand>
        <name>heme b</name>
        <dbReference type="ChEBI" id="CHEBI:60344"/>
        <label>b566</label>
    </ligand>
    <ligandPart>
        <name>Fe</name>
        <dbReference type="ChEBI" id="CHEBI:18248"/>
    </ligandPart>
</feature>
<feature type="binding site" evidence="2">
    <location>
        <position position="201"/>
    </location>
    <ligand>
        <name>a ubiquinone</name>
        <dbReference type="ChEBI" id="CHEBI:16389"/>
    </ligand>
</feature>
<gene>
    <name type="primary">MT-CYB</name>
    <name type="synonym">COB</name>
    <name type="synonym">CYTB</name>
    <name type="synonym">MTCYB</name>
</gene>
<evidence type="ECO:0000250" key="1"/>
<evidence type="ECO:0000250" key="2">
    <source>
        <dbReference type="UniProtKB" id="P00157"/>
    </source>
</evidence>
<evidence type="ECO:0000255" key="3">
    <source>
        <dbReference type="PROSITE-ProRule" id="PRU00967"/>
    </source>
</evidence>
<evidence type="ECO:0000255" key="4">
    <source>
        <dbReference type="PROSITE-ProRule" id="PRU00968"/>
    </source>
</evidence>
<geneLocation type="mitochondrion"/>